<comment type="function">
    <text evidence="1">Participates in transcription elongation, termination and antitermination.</text>
</comment>
<comment type="similarity">
    <text evidence="1">Belongs to the NusG family.</text>
</comment>
<reference key="1">
    <citation type="journal article" date="2001" name="Science">
        <title>Mechanisms of evolution in Rickettsia conorii and R. prowazekii.</title>
        <authorList>
            <person name="Ogata H."/>
            <person name="Audic S."/>
            <person name="Renesto-Audiffren P."/>
            <person name="Fournier P.-E."/>
            <person name="Barbe V."/>
            <person name="Samson D."/>
            <person name="Roux V."/>
            <person name="Cossart P."/>
            <person name="Weissenbach J."/>
            <person name="Claverie J.-M."/>
            <person name="Raoult D."/>
        </authorList>
    </citation>
    <scope>NUCLEOTIDE SEQUENCE [LARGE SCALE GENOMIC DNA]</scope>
    <source>
        <strain>ATCC VR-613 / Malish 7</strain>
    </source>
</reference>
<accession>Q92J91</accession>
<name>NUSG_RICCN</name>
<gene>
    <name evidence="1" type="primary">nusG</name>
    <name type="ordered locus">RC0176</name>
</gene>
<evidence type="ECO:0000255" key="1">
    <source>
        <dbReference type="HAMAP-Rule" id="MF_00948"/>
    </source>
</evidence>
<dbReference type="EMBL" id="AE006914">
    <property type="protein sequence ID" value="AAL02714.1"/>
    <property type="molecule type" value="Genomic_DNA"/>
</dbReference>
<dbReference type="PIR" id="H97721">
    <property type="entry name" value="H97721"/>
</dbReference>
<dbReference type="RefSeq" id="WP_010976848.1">
    <property type="nucleotide sequence ID" value="NC_003103.1"/>
</dbReference>
<dbReference type="SMR" id="Q92J91"/>
<dbReference type="GeneID" id="928016"/>
<dbReference type="KEGG" id="rco:RC0176"/>
<dbReference type="PATRIC" id="fig|272944.4.peg.205"/>
<dbReference type="HOGENOM" id="CLU_067287_1_0_5"/>
<dbReference type="Proteomes" id="UP000000816">
    <property type="component" value="Chromosome"/>
</dbReference>
<dbReference type="GO" id="GO:0005829">
    <property type="term" value="C:cytosol"/>
    <property type="evidence" value="ECO:0007669"/>
    <property type="project" value="TreeGrafter"/>
</dbReference>
<dbReference type="GO" id="GO:0006353">
    <property type="term" value="P:DNA-templated transcription termination"/>
    <property type="evidence" value="ECO:0007669"/>
    <property type="project" value="UniProtKB-UniRule"/>
</dbReference>
<dbReference type="GO" id="GO:0032784">
    <property type="term" value="P:regulation of DNA-templated transcription elongation"/>
    <property type="evidence" value="ECO:0007669"/>
    <property type="project" value="InterPro"/>
</dbReference>
<dbReference type="GO" id="GO:0031564">
    <property type="term" value="P:transcription antitermination"/>
    <property type="evidence" value="ECO:0007669"/>
    <property type="project" value="UniProtKB-UniRule"/>
</dbReference>
<dbReference type="GO" id="GO:0140673">
    <property type="term" value="P:transcription elongation-coupled chromatin remodeling"/>
    <property type="evidence" value="ECO:0007669"/>
    <property type="project" value="InterPro"/>
</dbReference>
<dbReference type="CDD" id="cd06091">
    <property type="entry name" value="KOW_NusG"/>
    <property type="match status" value="1"/>
</dbReference>
<dbReference type="CDD" id="cd09891">
    <property type="entry name" value="NGN_Bact_1"/>
    <property type="match status" value="1"/>
</dbReference>
<dbReference type="FunFam" id="2.30.30.30:FF:000002">
    <property type="entry name" value="Transcription termination/antitermination factor NusG"/>
    <property type="match status" value="1"/>
</dbReference>
<dbReference type="Gene3D" id="2.30.30.30">
    <property type="match status" value="1"/>
</dbReference>
<dbReference type="Gene3D" id="3.30.70.940">
    <property type="entry name" value="NusG, N-terminal domain"/>
    <property type="match status" value="1"/>
</dbReference>
<dbReference type="HAMAP" id="MF_00948">
    <property type="entry name" value="NusG"/>
    <property type="match status" value="1"/>
</dbReference>
<dbReference type="InterPro" id="IPR005824">
    <property type="entry name" value="KOW"/>
</dbReference>
<dbReference type="InterPro" id="IPR047050">
    <property type="entry name" value="NGN"/>
</dbReference>
<dbReference type="InterPro" id="IPR006645">
    <property type="entry name" value="NGN-like_dom"/>
</dbReference>
<dbReference type="InterPro" id="IPR036735">
    <property type="entry name" value="NGN_dom_sf"/>
</dbReference>
<dbReference type="InterPro" id="IPR043425">
    <property type="entry name" value="NusG-like"/>
</dbReference>
<dbReference type="InterPro" id="IPR014722">
    <property type="entry name" value="Rib_uL2_dom2"/>
</dbReference>
<dbReference type="InterPro" id="IPR001062">
    <property type="entry name" value="Transcrpt_antiterm_NusG"/>
</dbReference>
<dbReference type="InterPro" id="IPR015869">
    <property type="entry name" value="Transcrpt_antiterm_NusG_bac_CS"/>
</dbReference>
<dbReference type="InterPro" id="IPR008991">
    <property type="entry name" value="Translation_prot_SH3-like_sf"/>
</dbReference>
<dbReference type="NCBIfam" id="TIGR00922">
    <property type="entry name" value="nusG"/>
    <property type="match status" value="1"/>
</dbReference>
<dbReference type="PANTHER" id="PTHR30265">
    <property type="entry name" value="RHO-INTERACTING TRANSCRIPTION TERMINATION FACTOR NUSG"/>
    <property type="match status" value="1"/>
</dbReference>
<dbReference type="PANTHER" id="PTHR30265:SF2">
    <property type="entry name" value="TRANSCRIPTION TERMINATION_ANTITERMINATION PROTEIN NUSG"/>
    <property type="match status" value="1"/>
</dbReference>
<dbReference type="Pfam" id="PF00467">
    <property type="entry name" value="KOW"/>
    <property type="match status" value="1"/>
</dbReference>
<dbReference type="Pfam" id="PF02357">
    <property type="entry name" value="NusG"/>
    <property type="match status" value="1"/>
</dbReference>
<dbReference type="PRINTS" id="PR00338">
    <property type="entry name" value="NUSGTNSCPFCT"/>
</dbReference>
<dbReference type="SMART" id="SM00739">
    <property type="entry name" value="KOW"/>
    <property type="match status" value="1"/>
</dbReference>
<dbReference type="SMART" id="SM00738">
    <property type="entry name" value="NGN"/>
    <property type="match status" value="1"/>
</dbReference>
<dbReference type="SUPFAM" id="SSF82679">
    <property type="entry name" value="N-utilization substance G protein NusG, N-terminal domain"/>
    <property type="match status" value="1"/>
</dbReference>
<dbReference type="SUPFAM" id="SSF50104">
    <property type="entry name" value="Translation proteins SH3-like domain"/>
    <property type="match status" value="1"/>
</dbReference>
<dbReference type="PROSITE" id="PS01014">
    <property type="entry name" value="NUSG"/>
    <property type="match status" value="1"/>
</dbReference>
<protein>
    <recommendedName>
        <fullName evidence="1">Transcription termination/antitermination protein NusG</fullName>
    </recommendedName>
</protein>
<sequence>MTAQSIDNILSSSEKNVKQWYVVHTASGAEKRIKEDMLRKIAKQNMTHFFEDILIPVFGVSEVKRGKNVKVEKKLMPSYILIKMNMTDKSWHLVKNISGVTGFLGSKTTPKALTESEIQNIFNNLEAEAKEAKNSKLYEVGEIVTVTDGPFETFMGTVEEIDQEKNRLKVSVAIFGKATPIELNFNQVKKND</sequence>
<proteinExistence type="inferred from homology"/>
<organism>
    <name type="scientific">Rickettsia conorii (strain ATCC VR-613 / Malish 7)</name>
    <dbReference type="NCBI Taxonomy" id="272944"/>
    <lineage>
        <taxon>Bacteria</taxon>
        <taxon>Pseudomonadati</taxon>
        <taxon>Pseudomonadota</taxon>
        <taxon>Alphaproteobacteria</taxon>
        <taxon>Rickettsiales</taxon>
        <taxon>Rickettsiaceae</taxon>
        <taxon>Rickettsieae</taxon>
        <taxon>Rickettsia</taxon>
        <taxon>spotted fever group</taxon>
    </lineage>
</organism>
<keyword id="KW-0804">Transcription</keyword>
<keyword id="KW-0889">Transcription antitermination</keyword>
<keyword id="KW-0805">Transcription regulation</keyword>
<keyword id="KW-0806">Transcription termination</keyword>
<feature type="chain" id="PRO_0000113941" description="Transcription termination/antitermination protein NusG">
    <location>
        <begin position="1"/>
        <end position="192"/>
    </location>
</feature>
<feature type="domain" description="KOW" evidence="1">
    <location>
        <begin position="140"/>
        <end position="168"/>
    </location>
</feature>